<dbReference type="EMBL" id="BX284605">
    <property type="protein sequence ID" value="CCD62487.1"/>
    <property type="molecule type" value="Genomic_DNA"/>
</dbReference>
<dbReference type="PIR" id="T31759">
    <property type="entry name" value="T31759"/>
</dbReference>
<dbReference type="RefSeq" id="NP_503983.1">
    <property type="nucleotide sequence ID" value="NM_071582.5"/>
</dbReference>
<dbReference type="SMR" id="O16327"/>
<dbReference type="FunCoup" id="O16327">
    <property type="interactions" value="2"/>
</dbReference>
<dbReference type="STRING" id="6239.C07G3.2.1"/>
<dbReference type="PaxDb" id="6239-C07G3.2"/>
<dbReference type="PeptideAtlas" id="O16327"/>
<dbReference type="EnsemblMetazoa" id="C07G3.2.1">
    <property type="protein sequence ID" value="C07G3.2.1"/>
    <property type="gene ID" value="WBGene00015574"/>
</dbReference>
<dbReference type="GeneID" id="182379"/>
<dbReference type="KEGG" id="cel:CELE_C07G3.2"/>
<dbReference type="UCSC" id="C07G3.2">
    <property type="organism name" value="c. elegans"/>
</dbReference>
<dbReference type="AGR" id="WB:WBGene00015574"/>
<dbReference type="CTD" id="182379"/>
<dbReference type="WormBase" id="C07G3.2">
    <property type="protein sequence ID" value="CE07993"/>
    <property type="gene ID" value="WBGene00015574"/>
    <property type="gene designation" value="irg-1"/>
</dbReference>
<dbReference type="eggNOG" id="ENOG502S5QN">
    <property type="taxonomic scope" value="Eukaryota"/>
</dbReference>
<dbReference type="GeneTree" id="ENSGT00940000164335"/>
<dbReference type="HOGENOM" id="CLU_084247_1_1_1"/>
<dbReference type="InParanoid" id="O16327"/>
<dbReference type="OMA" id="CQLLEHF"/>
<dbReference type="OrthoDB" id="206452at2759"/>
<dbReference type="PhylomeDB" id="O16327"/>
<dbReference type="Proteomes" id="UP000001940">
    <property type="component" value="Chromosome V"/>
</dbReference>
<dbReference type="Bgee" id="WBGene00015574">
    <property type="expression patterns" value="Expressed in pharyngeal muscle cell (C elegans) and 2 other cell types or tissues"/>
</dbReference>
<dbReference type="GO" id="GO:0140367">
    <property type="term" value="P:antibacterial innate immune response"/>
    <property type="evidence" value="ECO:0000270"/>
    <property type="project" value="WormBase"/>
</dbReference>
<dbReference type="GO" id="GO:0050829">
    <property type="term" value="P:defense response to Gram-negative bacterium"/>
    <property type="evidence" value="ECO:0000270"/>
    <property type="project" value="WormBase"/>
</dbReference>
<dbReference type="GO" id="GO:0045087">
    <property type="term" value="P:innate immune response"/>
    <property type="evidence" value="ECO:0007007"/>
    <property type="project" value="WormBase"/>
</dbReference>
<dbReference type="CDD" id="cd15457">
    <property type="entry name" value="NADAR"/>
    <property type="match status" value="1"/>
</dbReference>
<dbReference type="FunFam" id="1.10.357.40:FF:000004">
    <property type="entry name" value="Infection Response protein"/>
    <property type="match status" value="1"/>
</dbReference>
<dbReference type="Gene3D" id="1.10.357.40">
    <property type="entry name" value="YbiA-like"/>
    <property type="match status" value="1"/>
</dbReference>
<dbReference type="InterPro" id="IPR012816">
    <property type="entry name" value="NADAR"/>
</dbReference>
<dbReference type="InterPro" id="IPR037238">
    <property type="entry name" value="YbiA-like_sf"/>
</dbReference>
<dbReference type="NCBIfam" id="TIGR02464">
    <property type="entry name" value="ribofla_fusion"/>
    <property type="match status" value="1"/>
</dbReference>
<dbReference type="Pfam" id="PF08719">
    <property type="entry name" value="NADAR"/>
    <property type="match status" value="1"/>
</dbReference>
<dbReference type="SUPFAM" id="SSF143990">
    <property type="entry name" value="YbiA-like"/>
    <property type="match status" value="1"/>
</dbReference>
<sequence length="212" mass="25223">MHTKVYVSEDRTKVFVLFYEAACVFSNFYPSGFEAKPVENFLKDTEKKEKLLKFTCSEQYFMYNKALLVGDMDIAEQILKETNPMKMKLLGRKLSMTKEQLKLWSQKSKDVMYRACLEKFSQNEDCRMILFRTHGMKLVEASPTDKIWGIGLDKADQRCEDERNWRGSNWLGEVLDQVREELWTRQEFKSNREQILKESLETRCQILEHFSH</sequence>
<feature type="chain" id="PRO_0000461573" description="Protein irg-1">
    <location>
        <begin position="1"/>
        <end position="212"/>
    </location>
</feature>
<gene>
    <name evidence="6" type="primary">irg-1</name>
    <name evidence="6" type="ORF">C07G3.2</name>
</gene>
<protein>
    <recommendedName>
        <fullName evidence="3">Protein irg-1</fullName>
    </recommendedName>
    <alternativeName>
        <fullName evidence="4">Infection response protein 1</fullName>
    </alternativeName>
</protein>
<proteinExistence type="evidence at transcript level"/>
<evidence type="ECO:0000269" key="1">
    <source>
    </source>
</evidence>
<evidence type="ECO:0000269" key="2">
    <source>
    </source>
</evidence>
<evidence type="ECO:0000305" key="3"/>
<evidence type="ECO:0000305" key="4">
    <source>
    </source>
</evidence>
<evidence type="ECO:0000312" key="5">
    <source>
        <dbReference type="Proteomes" id="UP000001940"/>
    </source>
</evidence>
<evidence type="ECO:0000312" key="6">
    <source>
        <dbReference type="WormBase" id="C07G3.2"/>
    </source>
</evidence>
<keyword id="KW-0391">Immunity</keyword>
<keyword id="KW-0399">Innate immunity</keyword>
<keyword id="KW-1185">Reference proteome</keyword>
<accession>O16327</accession>
<organism evidence="5">
    <name type="scientific">Caenorhabditis elegans</name>
    <dbReference type="NCBI Taxonomy" id="6239"/>
    <lineage>
        <taxon>Eukaryota</taxon>
        <taxon>Metazoa</taxon>
        <taxon>Ecdysozoa</taxon>
        <taxon>Nematoda</taxon>
        <taxon>Chromadorea</taxon>
        <taxon>Rhabditida</taxon>
        <taxon>Rhabditina</taxon>
        <taxon>Rhabditomorpha</taxon>
        <taxon>Rhabditoidea</taxon>
        <taxon>Rhabditidae</taxon>
        <taxon>Peloderinae</taxon>
        <taxon>Caenorhabditis</taxon>
    </lineage>
</organism>
<name>IRG1_CAEEL</name>
<comment type="function">
    <text evidence="1 2">Plays a role in innate immunity by conferring resistance to virulent strains of the Gram-negative bacterium P.aeruginosa via the zip-2 pathway (PubMed:20133860, PubMed:22520465). Can act independently of several immunity-related pathways including pmk-1 p38MAPK, dbl-1 TGF-beta, kgb-1 JNK and bar-1/beta-catenin pathways (PubMed:20133860, PubMed:22520465).</text>
</comment>
<comment type="tissue specificity">
    <text evidence="4">Expressed in the intestine.</text>
</comment>
<comment type="induction">
    <text evidence="1 2">Exposure to P.aeruginosa upregulates expression, in proportion to bacterial strain virulence and dependent on zip-2, but independent of several immunity-related pathways including pmk-1 p38MAPK, dbl-1 TGF-beta, kgb-1 JNK and bar-1/beta-catenin pathways (PubMed:20133860). Cadmium weakly induces expression in a pmk-1-dependent manner (PubMed:20133860). Induced by translational inhibitors such as cycloheximide and exogenous or P.aeruginosa-derived ToxA, in a zip-2 dependent manner (PubMed:22520465).</text>
</comment>
<reference evidence="5" key="1">
    <citation type="journal article" date="1998" name="Science">
        <title>Genome sequence of the nematode C. elegans: a platform for investigating biology.</title>
        <authorList>
            <consortium name="The C. elegans sequencing consortium"/>
        </authorList>
    </citation>
    <scope>NUCLEOTIDE SEQUENCE [LARGE SCALE GENOMIC DNA]</scope>
    <source>
        <strain evidence="5">Bristol N2</strain>
    </source>
</reference>
<reference evidence="3" key="2">
    <citation type="journal article" date="2010" name="Proc. Natl. Acad. Sci. U.S.A.">
        <title>bZIP transcription factor zip-2 mediates an early response to Pseudomonas aeruginosa infection in Caenorhabditis elegans.</title>
        <authorList>
            <person name="Estes K.A."/>
            <person name="Dunbar T.L."/>
            <person name="Powell J.R."/>
            <person name="Ausubel F.M."/>
            <person name="Troemel E.R."/>
        </authorList>
    </citation>
    <scope>FUNCTION</scope>
    <scope>TISSUE SPECIFICITY</scope>
    <scope>INDUCTION BY P.AERUGINOSA INFECTION</scope>
</reference>
<reference evidence="3" key="3">
    <citation type="journal article" date="2012" name="Cell Host Microbe">
        <title>C. elegans detects pathogen-induced translational inhibition to activate immune signaling.</title>
        <authorList>
            <person name="Dunbar T.L."/>
            <person name="Yan Z."/>
            <person name="Balla K.M."/>
            <person name="Smelkinson M.G."/>
            <person name="Troemel E.R."/>
        </authorList>
    </citation>
    <scope>FUNCTION</scope>
    <scope>INDUCTION BY P.AERUGINOSA INFECTION; EXOTOXIN A AND CYCLOHEXIMIDE</scope>
</reference>